<comment type="function">
    <text evidence="4">Plays a negative role in salicylic acid (SA)-mediated resistance to powdery mildew (e.g. Golovinomyces cichoracearum). May modulate plant immunity by regulating the relocation of EDR1 by interacting with CHC2 and modulating endocytosis.</text>
</comment>
<comment type="subunit">
    <text evidence="3 4">Interacts with RLK902 (PubMed:15618630). Binds and recruits EDR1 at the powdery mildew (e.g. G.cichoracearum) penetration site on the plasma membrane. Interacts with CHC2 (PubMed:25747881).</text>
</comment>
<comment type="interaction">
    <interactant intactId="EBI-1544548">
        <id>Q9FHK4</id>
    </interactant>
    <interactant intactId="EBI-4426649">
        <id>Q17TI5</id>
        <label>BRX</label>
    </interactant>
    <organismsDiffer>false</organismsDiffer>
    <experiments>3</experiments>
</comment>
<comment type="subcellular location">
    <subcellularLocation>
        <location evidence="4">Cell membrane</location>
    </subcellularLocation>
    <subcellularLocation>
        <location evidence="4">Endosome</location>
    </subcellularLocation>
    <text evidence="4">Displays dynamic movement in cells with accumulation at the plasma membrane around pathogenic fungus penetration site.</text>
</comment>
<comment type="tissue specificity">
    <text evidence="3">Expressed in stems and rosette leaves, and weakly in inflorescences. Not detected in roots.</text>
</comment>
<comment type="induction">
    <text evidence="3 4">Rapid but transient induction by wounding, salicylic acid treatment or pathogen infection (PubMed:15618630). Accumulates at the penetration site of powdery mildew (e.g. G.cichoracearum) infection (PubMed:25747881).</text>
</comment>
<comment type="disruption phenotype">
    <text evidence="4">Mild, hypersensitive response-like lesions under long-day conditions at late growth stages. Enhanced salicylic acid (SA) accumulation and SA signaling-dependent disease resistance to Golovinomyces cichoracearum UCSC1 associated with enhanced H(2)O(2) accumulation and callose deposition in the infection site as well as higher expression of defense-related genes (PRs). Reduced endocytosis rates.</text>
</comment>
<sequence>MASQTGQKIRLVRCPKCLKILQEDEDVPVYQCGGCSAILQAKRRNIAPSSTPSAGETERAQANEPQSVPETNNVSSSSGQDTVLPSSPGRSVDQEYEKGRNASMESTEKELDDLELSNGDGTNEIQEQECSLGDSEKNEREDNSRLESHMMNTVAEAAGSGSSSGSLSVDHVVAARASNPSGNSEISPDASPVEEKQSQLDILANKTPSAYDVVAARASNSSGNAEISPDASPVEEKQSQLDYPANKTSSAYDGSESSSDEREGQLLDDDEQWNALQKIRSGKFEMHRYPGYKEQGASSSSPFSENRRNGITTYNERHQNRSLQLEGPGGRLGRQGRRHVTEQLRPDMPFYPRESYTRGSPSHPSHDEFDRYPRAHSLQMPSYAGGMNHDFVDYMYHNNPRARGQGQGSRISGEMGRNHGGWYSGQLHNSYSSYSASPQRPMEQPEYHPRWRREIVSDVEDHQRNRHAGHHHELQTRRLRERQRVAKRHVRPTAGGAPFVSCYSCSENLQLPVDFLIFKRKHHLLRCGTCTTVLRFSLQSRNHLVPAVTHDINANRNSNSTSESPIDKAPSKPEKLRSSVQDEELPVARGSPLHRLMGYSTVSQVFKVSQRPPSI</sequence>
<gene>
    <name evidence="6" type="primary">EDR4</name>
    <name evidence="5" type="synonym">Y-1</name>
    <name evidence="7" type="ordered locus">At5g05190</name>
    <name evidence="8" type="ORF">K2A11.6</name>
</gene>
<accession>Q9FHK4</accession>
<keyword id="KW-1003">Cell membrane</keyword>
<keyword id="KW-0175">Coiled coil</keyword>
<keyword id="KW-0254">Endocytosis</keyword>
<keyword id="KW-0967">Endosome</keyword>
<keyword id="KW-0472">Membrane</keyword>
<keyword id="KW-0611">Plant defense</keyword>
<keyword id="KW-1185">Reference proteome</keyword>
<protein>
    <recommendedName>
        <fullName evidence="6">Protein ENHANCED DISEASE RESISTANCE 4</fullName>
    </recommendedName>
</protein>
<feature type="chain" id="PRO_0000317077" description="Protein ENHANCED DISEASE RESISTANCE 4">
    <location>
        <begin position="1"/>
        <end position="615"/>
    </location>
</feature>
<feature type="region of interest" description="Disordered" evidence="2">
    <location>
        <begin position="46"/>
        <end position="271"/>
    </location>
</feature>
<feature type="region of interest" description="Disordered" evidence="2">
    <location>
        <begin position="292"/>
        <end position="336"/>
    </location>
</feature>
<feature type="region of interest" description="Disordered" evidence="2">
    <location>
        <begin position="549"/>
        <end position="592"/>
    </location>
</feature>
<feature type="coiled-coil region" evidence="1">
    <location>
        <begin position="104"/>
        <end position="129"/>
    </location>
</feature>
<feature type="compositionally biased region" description="Polar residues" evidence="2">
    <location>
        <begin position="63"/>
        <end position="89"/>
    </location>
</feature>
<feature type="compositionally biased region" description="Polar residues" evidence="2">
    <location>
        <begin position="119"/>
        <end position="129"/>
    </location>
</feature>
<feature type="compositionally biased region" description="Basic and acidic residues" evidence="2">
    <location>
        <begin position="134"/>
        <end position="148"/>
    </location>
</feature>
<feature type="compositionally biased region" description="Low complexity" evidence="2">
    <location>
        <begin position="159"/>
        <end position="168"/>
    </location>
</feature>
<feature type="compositionally biased region" description="Polar residues" evidence="2">
    <location>
        <begin position="296"/>
        <end position="314"/>
    </location>
</feature>
<feature type="compositionally biased region" description="Polar residues" evidence="2">
    <location>
        <begin position="552"/>
        <end position="564"/>
    </location>
</feature>
<feature type="compositionally biased region" description="Basic and acidic residues" evidence="2">
    <location>
        <begin position="565"/>
        <end position="577"/>
    </location>
</feature>
<evidence type="ECO:0000255" key="1"/>
<evidence type="ECO:0000256" key="2">
    <source>
        <dbReference type="SAM" id="MobiDB-lite"/>
    </source>
</evidence>
<evidence type="ECO:0000269" key="3">
    <source>
    </source>
</evidence>
<evidence type="ECO:0000269" key="4">
    <source>
    </source>
</evidence>
<evidence type="ECO:0000303" key="5">
    <source>
    </source>
</evidence>
<evidence type="ECO:0000303" key="6">
    <source>
    </source>
</evidence>
<evidence type="ECO:0000312" key="7">
    <source>
        <dbReference type="Araport" id="AT5G05190"/>
    </source>
</evidence>
<evidence type="ECO:0000312" key="8">
    <source>
        <dbReference type="EMBL" id="BAB09695.1"/>
    </source>
</evidence>
<proteinExistence type="evidence at protein level"/>
<reference key="1">
    <citation type="journal article" date="1999" name="DNA Res.">
        <title>Structural analysis of Arabidopsis thaliana chromosome 5. IX. Sequence features of the regions of 1,011,550 bp covered by seventeen P1 and TAC clones.</title>
        <authorList>
            <person name="Kaneko T."/>
            <person name="Katoh T."/>
            <person name="Sato S."/>
            <person name="Nakamura Y."/>
            <person name="Asamizu E."/>
            <person name="Kotani H."/>
            <person name="Miyajima N."/>
            <person name="Tabata S."/>
        </authorList>
    </citation>
    <scope>NUCLEOTIDE SEQUENCE [LARGE SCALE GENOMIC DNA]</scope>
    <source>
        <strain>cv. Columbia</strain>
    </source>
</reference>
<reference key="2">
    <citation type="journal article" date="2017" name="Plant J.">
        <title>Araport11: a complete reannotation of the Arabidopsis thaliana reference genome.</title>
        <authorList>
            <person name="Cheng C.Y."/>
            <person name="Krishnakumar V."/>
            <person name="Chan A.P."/>
            <person name="Thibaud-Nissen F."/>
            <person name="Schobel S."/>
            <person name="Town C.D."/>
        </authorList>
    </citation>
    <scope>GENOME REANNOTATION</scope>
    <source>
        <strain>cv. Columbia</strain>
    </source>
</reference>
<reference key="3">
    <citation type="journal article" date="2003" name="Science">
        <title>Empirical analysis of transcriptional activity in the Arabidopsis genome.</title>
        <authorList>
            <person name="Yamada K."/>
            <person name="Lim J."/>
            <person name="Dale J.M."/>
            <person name="Chen H."/>
            <person name="Shinn P."/>
            <person name="Palm C.J."/>
            <person name="Southwick A.M."/>
            <person name="Wu H.C."/>
            <person name="Kim C.J."/>
            <person name="Nguyen M."/>
            <person name="Pham P.K."/>
            <person name="Cheuk R.F."/>
            <person name="Karlin-Newmann G."/>
            <person name="Liu S.X."/>
            <person name="Lam B."/>
            <person name="Sakano H."/>
            <person name="Wu T."/>
            <person name="Yu G."/>
            <person name="Miranda M."/>
            <person name="Quach H.L."/>
            <person name="Tripp M."/>
            <person name="Chang C.H."/>
            <person name="Lee J.M."/>
            <person name="Toriumi M.J."/>
            <person name="Chan M.M."/>
            <person name="Tang C.C."/>
            <person name="Onodera C.S."/>
            <person name="Deng J.M."/>
            <person name="Akiyama K."/>
            <person name="Ansari Y."/>
            <person name="Arakawa T."/>
            <person name="Banh J."/>
            <person name="Banno F."/>
            <person name="Bowser L."/>
            <person name="Brooks S.Y."/>
            <person name="Carninci P."/>
            <person name="Chao Q."/>
            <person name="Choy N."/>
            <person name="Enju A."/>
            <person name="Goldsmith A.D."/>
            <person name="Gurjal M."/>
            <person name="Hansen N.F."/>
            <person name="Hayashizaki Y."/>
            <person name="Johnson-Hopson C."/>
            <person name="Hsuan V.W."/>
            <person name="Iida K."/>
            <person name="Karnes M."/>
            <person name="Khan S."/>
            <person name="Koesema E."/>
            <person name="Ishida J."/>
            <person name="Jiang P.X."/>
            <person name="Jones T."/>
            <person name="Kawai J."/>
            <person name="Kamiya A."/>
            <person name="Meyers C."/>
            <person name="Nakajima M."/>
            <person name="Narusaka M."/>
            <person name="Seki M."/>
            <person name="Sakurai T."/>
            <person name="Satou M."/>
            <person name="Tamse R."/>
            <person name="Vaysberg M."/>
            <person name="Wallender E.K."/>
            <person name="Wong C."/>
            <person name="Yamamura Y."/>
            <person name="Yuan S."/>
            <person name="Shinozaki K."/>
            <person name="Davis R.W."/>
            <person name="Theologis A."/>
            <person name="Ecker J.R."/>
        </authorList>
    </citation>
    <scope>NUCLEOTIDE SEQUENCE [LARGE SCALE MRNA]</scope>
    <source>
        <strain>cv. Columbia</strain>
    </source>
</reference>
<reference key="4">
    <citation type="journal article" date="2004" name="Biosci. Biotechnol. Biochem.">
        <title>Identification of three clones which commonly interact with the kinase domains of highly homologous two receptor-like kinases, RLK902 and RKL1.</title>
        <authorList>
            <person name="Tarutani Y."/>
            <person name="Sasaki A."/>
            <person name="Yasuda M."/>
            <person name="Nakashita H."/>
            <person name="Yoshida S."/>
            <person name="Yamaguchi I."/>
            <person name="Suzuki Y."/>
        </authorList>
    </citation>
    <scope>INTERACTION WITH RLK902</scope>
    <scope>TISSUE SPECIFICITY</scope>
    <scope>INDUCTION</scope>
</reference>
<reference key="5">
    <citation type="journal article" date="2015" name="Plant Cell">
        <title>ENHANCED DISEASE RESISTANCE4 associates with CLATHRIN HEAVY CHAIN2 and modulates plant immunity by regulating relocation of EDR1 in Arabidopsis.</title>
        <authorList>
            <person name="Wu G."/>
            <person name="Liu S."/>
            <person name="Zhao Y."/>
            <person name="Wang W."/>
            <person name="Kong Z."/>
            <person name="Tang D."/>
        </authorList>
    </citation>
    <scope>FUNCTION</scope>
    <scope>DISRUPTION PHENOTYPE</scope>
    <scope>SUBCELLULAR LOCATION</scope>
    <scope>INDUCTION BY POWDERY MILDEW</scope>
    <scope>INTERACTION WITH EDR1 AND CHC2</scope>
    <source>
        <strain>cv. Columbia</strain>
    </source>
</reference>
<organism>
    <name type="scientific">Arabidopsis thaliana</name>
    <name type="common">Mouse-ear cress</name>
    <dbReference type="NCBI Taxonomy" id="3702"/>
    <lineage>
        <taxon>Eukaryota</taxon>
        <taxon>Viridiplantae</taxon>
        <taxon>Streptophyta</taxon>
        <taxon>Embryophyta</taxon>
        <taxon>Tracheophyta</taxon>
        <taxon>Spermatophyta</taxon>
        <taxon>Magnoliopsida</taxon>
        <taxon>eudicotyledons</taxon>
        <taxon>Gunneridae</taxon>
        <taxon>Pentapetalae</taxon>
        <taxon>rosids</taxon>
        <taxon>malvids</taxon>
        <taxon>Brassicales</taxon>
        <taxon>Brassicaceae</taxon>
        <taxon>Camelineae</taxon>
        <taxon>Arabidopsis</taxon>
    </lineage>
</organism>
<name>EDR4_ARATH</name>
<dbReference type="EMBL" id="AB018111">
    <property type="protein sequence ID" value="BAB09695.1"/>
    <property type="molecule type" value="Genomic_DNA"/>
</dbReference>
<dbReference type="EMBL" id="CP002688">
    <property type="protein sequence ID" value="AED90839.1"/>
    <property type="molecule type" value="Genomic_DNA"/>
</dbReference>
<dbReference type="EMBL" id="AY099876">
    <property type="protein sequence ID" value="AAM20727.1"/>
    <property type="molecule type" value="mRNA"/>
</dbReference>
<dbReference type="EMBL" id="BT008380">
    <property type="protein sequence ID" value="AAP37739.1"/>
    <property type="molecule type" value="mRNA"/>
</dbReference>
<dbReference type="RefSeq" id="NP_196138.1">
    <property type="nucleotide sequence ID" value="NM_120601.5"/>
</dbReference>
<dbReference type="BioGRID" id="15680">
    <property type="interactions" value="14"/>
</dbReference>
<dbReference type="FunCoup" id="Q9FHK4">
    <property type="interactions" value="142"/>
</dbReference>
<dbReference type="IntAct" id="Q9FHK4">
    <property type="interactions" value="18"/>
</dbReference>
<dbReference type="STRING" id="3702.Q9FHK4"/>
<dbReference type="GlyGen" id="Q9FHK4">
    <property type="glycosylation" value="1 site"/>
</dbReference>
<dbReference type="iPTMnet" id="Q9FHK4"/>
<dbReference type="PaxDb" id="3702-AT5G05190.1"/>
<dbReference type="ProteomicsDB" id="247074"/>
<dbReference type="EnsemblPlants" id="AT5G05190.1">
    <property type="protein sequence ID" value="AT5G05190.1"/>
    <property type="gene ID" value="AT5G05190"/>
</dbReference>
<dbReference type="GeneID" id="830401"/>
<dbReference type="Gramene" id="AT5G05190.1">
    <property type="protein sequence ID" value="AT5G05190.1"/>
    <property type="gene ID" value="AT5G05190"/>
</dbReference>
<dbReference type="KEGG" id="ath:AT5G05190"/>
<dbReference type="Araport" id="AT5G05190"/>
<dbReference type="TAIR" id="AT5G05190">
    <property type="gene designation" value="EDR4"/>
</dbReference>
<dbReference type="eggNOG" id="ENOG502S3VJ">
    <property type="taxonomic scope" value="Eukaryota"/>
</dbReference>
<dbReference type="HOGENOM" id="CLU_403676_0_0_1"/>
<dbReference type="InParanoid" id="Q9FHK4"/>
<dbReference type="OMA" id="PSHDEFD"/>
<dbReference type="OrthoDB" id="1930285at2759"/>
<dbReference type="PhylomeDB" id="Q9FHK4"/>
<dbReference type="PRO" id="PR:Q9FHK4"/>
<dbReference type="Proteomes" id="UP000006548">
    <property type="component" value="Chromosome 5"/>
</dbReference>
<dbReference type="ExpressionAtlas" id="Q9FHK4">
    <property type="expression patterns" value="baseline and differential"/>
</dbReference>
<dbReference type="GO" id="GO:0005768">
    <property type="term" value="C:endosome"/>
    <property type="evidence" value="ECO:0000314"/>
    <property type="project" value="UniProtKB"/>
</dbReference>
<dbReference type="GO" id="GO:0005886">
    <property type="term" value="C:plasma membrane"/>
    <property type="evidence" value="ECO:0000314"/>
    <property type="project" value="UniProtKB"/>
</dbReference>
<dbReference type="GO" id="GO:0006952">
    <property type="term" value="P:defense response"/>
    <property type="evidence" value="ECO:0007669"/>
    <property type="project" value="UniProtKB-KW"/>
</dbReference>
<dbReference type="GO" id="GO:0006897">
    <property type="term" value="P:endocytosis"/>
    <property type="evidence" value="ECO:0007669"/>
    <property type="project" value="UniProtKB-KW"/>
</dbReference>
<dbReference type="GO" id="GO:1900150">
    <property type="term" value="P:regulation of defense response to fungus"/>
    <property type="evidence" value="ECO:0000270"/>
    <property type="project" value="UniProtKB"/>
</dbReference>
<dbReference type="GO" id="GO:0030100">
    <property type="term" value="P:regulation of endocytosis"/>
    <property type="evidence" value="ECO:0000315"/>
    <property type="project" value="UniProtKB"/>
</dbReference>
<dbReference type="GO" id="GO:0009620">
    <property type="term" value="P:response to fungus"/>
    <property type="evidence" value="ECO:0000270"/>
    <property type="project" value="UniProtKB"/>
</dbReference>
<dbReference type="GO" id="GO:0009863">
    <property type="term" value="P:salicylic acid mediated signaling pathway"/>
    <property type="evidence" value="ECO:0000315"/>
    <property type="project" value="UniProtKB"/>
</dbReference>
<dbReference type="InterPro" id="IPR040244">
    <property type="entry name" value="EDR4-like"/>
</dbReference>
<dbReference type="InterPro" id="IPR055126">
    <property type="entry name" value="EDR4-like_N"/>
</dbReference>
<dbReference type="InterPro" id="IPR021480">
    <property type="entry name" value="Zinc_ribbon_12"/>
</dbReference>
<dbReference type="PANTHER" id="PTHR31105">
    <property type="entry name" value="EXTRA-LARGE G-PROTEIN-LIKE"/>
    <property type="match status" value="1"/>
</dbReference>
<dbReference type="PANTHER" id="PTHR31105:SF38">
    <property type="entry name" value="PROTEIN ENHANCED DISEASE RESISTANCE 4"/>
    <property type="match status" value="1"/>
</dbReference>
<dbReference type="Pfam" id="PF22910">
    <property type="entry name" value="EDR4-like_1st"/>
    <property type="match status" value="1"/>
</dbReference>
<dbReference type="Pfam" id="PF11331">
    <property type="entry name" value="Zn_ribbon_12"/>
    <property type="match status" value="1"/>
</dbReference>